<accession>Q9M3I8</accession>
<reference key="1">
    <citation type="journal article" date="2001" name="Plant Mol. Biol.">
        <title>The plastid chromosome of spinach (Spinacia oleracea): complete nucleotide sequence and gene organization.</title>
        <authorList>
            <person name="Schmitz-Linneweber C."/>
            <person name="Maier R.M."/>
            <person name="Alcaraz J.-P."/>
            <person name="Cottet A."/>
            <person name="Herrmann R.G."/>
            <person name="Mache R."/>
        </authorList>
    </citation>
    <scope>NUCLEOTIDE SEQUENCE [LARGE SCALE GENOMIC DNA]</scope>
    <source>
        <strain>cv. Geant d'hiver</strain>
        <strain>cv. Monatol</strain>
    </source>
</reference>
<feature type="chain" id="PRO_0000118362" description="NAD(P)H-quinone oxidoreductase subunit 6, chloroplastic">
    <location>
        <begin position="1"/>
        <end position="176"/>
    </location>
</feature>
<feature type="transmembrane region" description="Helical" evidence="2">
    <location>
        <begin position="10"/>
        <end position="30"/>
    </location>
</feature>
<feature type="transmembrane region" description="Helical" evidence="2">
    <location>
        <begin position="33"/>
        <end position="53"/>
    </location>
</feature>
<feature type="transmembrane region" description="Helical" evidence="2">
    <location>
        <begin position="63"/>
        <end position="83"/>
    </location>
</feature>
<feature type="transmembrane region" description="Helical" evidence="2">
    <location>
        <begin position="105"/>
        <end position="125"/>
    </location>
</feature>
<feature type="transmembrane region" description="Helical" evidence="2">
    <location>
        <begin position="152"/>
        <end position="172"/>
    </location>
</feature>
<protein>
    <recommendedName>
        <fullName>NAD(P)H-quinone oxidoreductase subunit 6, chloroplastic</fullName>
        <ecNumber>7.1.1.-</ecNumber>
    </recommendedName>
    <alternativeName>
        <fullName>NAD(P)H dehydrogenase subunit 6</fullName>
    </alternativeName>
    <alternativeName>
        <fullName>NADH-plastoquinone oxidoreductase subunit 6</fullName>
    </alternativeName>
</protein>
<gene>
    <name type="primary">ndhG</name>
</gene>
<name>NU6C_SPIOL</name>
<proteinExistence type="evidence at protein level"/>
<comment type="function">
    <text evidence="1">NDH shuttles electrons from NAD(P)H:plastoquinone, via FMN and iron-sulfur (Fe-S) centers, to quinones in the photosynthetic chain and possibly in a chloroplast respiratory chain. The immediate electron acceptor for the enzyme in this species is believed to be plastoquinone. Couples the redox reaction to proton translocation, and thus conserves the redox energy in a proton gradient (By similarity).</text>
</comment>
<comment type="catalytic activity">
    <reaction>
        <text>a plastoquinone + NADH + (n+1) H(+)(in) = a plastoquinol + NAD(+) + n H(+)(out)</text>
        <dbReference type="Rhea" id="RHEA:42608"/>
        <dbReference type="Rhea" id="RHEA-COMP:9561"/>
        <dbReference type="Rhea" id="RHEA-COMP:9562"/>
        <dbReference type="ChEBI" id="CHEBI:15378"/>
        <dbReference type="ChEBI" id="CHEBI:17757"/>
        <dbReference type="ChEBI" id="CHEBI:57540"/>
        <dbReference type="ChEBI" id="CHEBI:57945"/>
        <dbReference type="ChEBI" id="CHEBI:62192"/>
    </reaction>
</comment>
<comment type="catalytic activity">
    <reaction>
        <text>a plastoquinone + NADPH + (n+1) H(+)(in) = a plastoquinol + NADP(+) + n H(+)(out)</text>
        <dbReference type="Rhea" id="RHEA:42612"/>
        <dbReference type="Rhea" id="RHEA-COMP:9561"/>
        <dbReference type="Rhea" id="RHEA-COMP:9562"/>
        <dbReference type="ChEBI" id="CHEBI:15378"/>
        <dbReference type="ChEBI" id="CHEBI:17757"/>
        <dbReference type="ChEBI" id="CHEBI:57783"/>
        <dbReference type="ChEBI" id="CHEBI:58349"/>
        <dbReference type="ChEBI" id="CHEBI:62192"/>
    </reaction>
</comment>
<comment type="subunit">
    <text evidence="1">NDH is composed of at least 16 different subunits, 5 of which are encoded in the nucleus.</text>
</comment>
<comment type="subcellular location">
    <subcellularLocation>
        <location evidence="1">Plastid</location>
        <location evidence="1">Chloroplast thylakoid membrane</location>
        <topology evidence="1">Multi-pass membrane protein</topology>
    </subcellularLocation>
</comment>
<comment type="similarity">
    <text evidence="3">Belongs to the complex I subunit 6 family.</text>
</comment>
<evidence type="ECO:0000250" key="1"/>
<evidence type="ECO:0000255" key="2"/>
<evidence type="ECO:0000305" key="3"/>
<keyword id="KW-0002">3D-structure</keyword>
<keyword id="KW-0150">Chloroplast</keyword>
<keyword id="KW-0472">Membrane</keyword>
<keyword id="KW-0520">NAD</keyword>
<keyword id="KW-0521">NADP</keyword>
<keyword id="KW-0934">Plastid</keyword>
<keyword id="KW-0618">Plastoquinone</keyword>
<keyword id="KW-0874">Quinone</keyword>
<keyword id="KW-1185">Reference proteome</keyword>
<keyword id="KW-0793">Thylakoid</keyword>
<keyword id="KW-1278">Translocase</keyword>
<keyword id="KW-0812">Transmembrane</keyword>
<keyword id="KW-1133">Transmembrane helix</keyword>
<keyword id="KW-0813">Transport</keyword>
<dbReference type="EC" id="7.1.1.-"/>
<dbReference type="EMBL" id="AJ400848">
    <property type="protein sequence ID" value="CAB88787.1"/>
    <property type="molecule type" value="Genomic_DNA"/>
</dbReference>
<dbReference type="RefSeq" id="NP_054991.1">
    <property type="nucleotide sequence ID" value="NC_002202.1"/>
</dbReference>
<dbReference type="PDB" id="9GRX">
    <property type="method" value="EM"/>
    <property type="resolution" value="3.19 A"/>
    <property type="chains" value="G=1-176"/>
</dbReference>
<dbReference type="PDBsum" id="9GRX"/>
<dbReference type="EMDB" id="EMD-51527"/>
<dbReference type="SMR" id="Q9M3I8"/>
<dbReference type="FunCoup" id="Q9M3I8">
    <property type="interactions" value="14"/>
</dbReference>
<dbReference type="STRING" id="3562.Q9M3I8"/>
<dbReference type="GeneID" id="2715592"/>
<dbReference type="KEGG" id="soe:2715592"/>
<dbReference type="InParanoid" id="Q9M3I8"/>
<dbReference type="OrthoDB" id="1893972at2759"/>
<dbReference type="Proteomes" id="UP001155700">
    <property type="component" value="Chloroplast Pltd"/>
</dbReference>
<dbReference type="GO" id="GO:0009535">
    <property type="term" value="C:chloroplast thylakoid membrane"/>
    <property type="evidence" value="ECO:0007669"/>
    <property type="project" value="UniProtKB-SubCell"/>
</dbReference>
<dbReference type="GO" id="GO:0008137">
    <property type="term" value="F:NADH dehydrogenase (ubiquinone) activity"/>
    <property type="evidence" value="ECO:0007669"/>
    <property type="project" value="InterPro"/>
</dbReference>
<dbReference type="GO" id="GO:0048038">
    <property type="term" value="F:quinone binding"/>
    <property type="evidence" value="ECO:0007669"/>
    <property type="project" value="UniProtKB-KW"/>
</dbReference>
<dbReference type="FunFam" id="1.20.120.1200:FF:000002">
    <property type="entry name" value="NAD(P)H-quinone oxidoreductase subunit 6, chloroplastic"/>
    <property type="match status" value="1"/>
</dbReference>
<dbReference type="Gene3D" id="1.20.120.1200">
    <property type="entry name" value="NADH-ubiquinone/plastoquinone oxidoreductase chain 6, subunit NuoJ"/>
    <property type="match status" value="1"/>
</dbReference>
<dbReference type="InterPro" id="IPR050290">
    <property type="entry name" value="NAD(P)H-Q_Oxidoreduct_6"/>
</dbReference>
<dbReference type="InterPro" id="IPR001457">
    <property type="entry name" value="NADH_UbQ/plastoQ_OxRdtase_su6"/>
</dbReference>
<dbReference type="InterPro" id="IPR042106">
    <property type="entry name" value="Nuo/plastoQ_OxRdtase_6_NuoJ"/>
</dbReference>
<dbReference type="PANTHER" id="PTHR48479">
    <property type="entry name" value="NAD(P)H-QUINONE OXIDOREDUCTASE SUBUNIT 6, CHLOROPLASTIC"/>
    <property type="match status" value="1"/>
</dbReference>
<dbReference type="PANTHER" id="PTHR48479:SF1">
    <property type="entry name" value="NAD(P)H-QUINONE OXIDOREDUCTASE SUBUNIT 6, CHLOROPLASTIC"/>
    <property type="match status" value="1"/>
</dbReference>
<dbReference type="Pfam" id="PF00499">
    <property type="entry name" value="Oxidored_q3"/>
    <property type="match status" value="1"/>
</dbReference>
<organism>
    <name type="scientific">Spinacia oleracea</name>
    <name type="common">Spinach</name>
    <dbReference type="NCBI Taxonomy" id="3562"/>
    <lineage>
        <taxon>Eukaryota</taxon>
        <taxon>Viridiplantae</taxon>
        <taxon>Streptophyta</taxon>
        <taxon>Embryophyta</taxon>
        <taxon>Tracheophyta</taxon>
        <taxon>Spermatophyta</taxon>
        <taxon>Magnoliopsida</taxon>
        <taxon>eudicotyledons</taxon>
        <taxon>Gunneridae</taxon>
        <taxon>Pentapetalae</taxon>
        <taxon>Caryophyllales</taxon>
        <taxon>Chenopodiaceae</taxon>
        <taxon>Chenopodioideae</taxon>
        <taxon>Anserineae</taxon>
        <taxon>Spinacia</taxon>
    </lineage>
</organism>
<sequence>MDLPGPIHDFLLVFLGSGLILGALGVVLFTNPIFSAFSLGLVLVCISLFYILANSHFVASAQLLIYVGAINVLIIFSVMFMSGPEYDKKFQLWTVGDGVTSLVCISLFVSLISTILNTSWYGIIWTTKSNQILEQDLINASQQIGIHLSTDFFLPFELISIILLVSLIGAIAVARQ</sequence>
<geneLocation type="chloroplast"/>